<protein>
    <recommendedName>
        <fullName evidence="1">Translation initiation factor IF-1</fullName>
    </recommendedName>
</protein>
<dbReference type="EMBL" id="AM398681">
    <property type="protein sequence ID" value="CAL43401.1"/>
    <property type="molecule type" value="Genomic_DNA"/>
</dbReference>
<dbReference type="RefSeq" id="WP_011963449.1">
    <property type="nucleotide sequence ID" value="NC_009613.3"/>
</dbReference>
<dbReference type="RefSeq" id="YP_001296212.1">
    <property type="nucleotide sequence ID" value="NC_009613.3"/>
</dbReference>
<dbReference type="SMR" id="A6GZ78"/>
<dbReference type="STRING" id="402612.FP1318"/>
<dbReference type="EnsemblBacteria" id="CAL43401">
    <property type="protein sequence ID" value="CAL43401"/>
    <property type="gene ID" value="FP1318"/>
</dbReference>
<dbReference type="GeneID" id="66553221"/>
<dbReference type="KEGG" id="fps:FP1318"/>
<dbReference type="PATRIC" id="fig|402612.5.peg.1335"/>
<dbReference type="eggNOG" id="COG0361">
    <property type="taxonomic scope" value="Bacteria"/>
</dbReference>
<dbReference type="HOGENOM" id="CLU_151267_1_0_10"/>
<dbReference type="OrthoDB" id="9803250at2"/>
<dbReference type="Proteomes" id="UP000006394">
    <property type="component" value="Chromosome"/>
</dbReference>
<dbReference type="GO" id="GO:0005829">
    <property type="term" value="C:cytosol"/>
    <property type="evidence" value="ECO:0007669"/>
    <property type="project" value="TreeGrafter"/>
</dbReference>
<dbReference type="GO" id="GO:0043022">
    <property type="term" value="F:ribosome binding"/>
    <property type="evidence" value="ECO:0007669"/>
    <property type="project" value="UniProtKB-UniRule"/>
</dbReference>
<dbReference type="GO" id="GO:0019843">
    <property type="term" value="F:rRNA binding"/>
    <property type="evidence" value="ECO:0007669"/>
    <property type="project" value="UniProtKB-UniRule"/>
</dbReference>
<dbReference type="GO" id="GO:0003743">
    <property type="term" value="F:translation initiation factor activity"/>
    <property type="evidence" value="ECO:0007669"/>
    <property type="project" value="UniProtKB-UniRule"/>
</dbReference>
<dbReference type="CDD" id="cd04451">
    <property type="entry name" value="S1_IF1"/>
    <property type="match status" value="1"/>
</dbReference>
<dbReference type="FunFam" id="2.40.50.140:FF:000002">
    <property type="entry name" value="Translation initiation factor IF-1"/>
    <property type="match status" value="1"/>
</dbReference>
<dbReference type="Gene3D" id="2.40.50.140">
    <property type="entry name" value="Nucleic acid-binding proteins"/>
    <property type="match status" value="1"/>
</dbReference>
<dbReference type="HAMAP" id="MF_00075">
    <property type="entry name" value="IF_1"/>
    <property type="match status" value="1"/>
</dbReference>
<dbReference type="InterPro" id="IPR012340">
    <property type="entry name" value="NA-bd_OB-fold"/>
</dbReference>
<dbReference type="InterPro" id="IPR006196">
    <property type="entry name" value="RNA-binding_domain_S1_IF1"/>
</dbReference>
<dbReference type="InterPro" id="IPR004368">
    <property type="entry name" value="TIF_IF1"/>
</dbReference>
<dbReference type="NCBIfam" id="TIGR00008">
    <property type="entry name" value="infA"/>
    <property type="match status" value="1"/>
</dbReference>
<dbReference type="PANTHER" id="PTHR33370">
    <property type="entry name" value="TRANSLATION INITIATION FACTOR IF-1, CHLOROPLASTIC"/>
    <property type="match status" value="1"/>
</dbReference>
<dbReference type="PANTHER" id="PTHR33370:SF1">
    <property type="entry name" value="TRANSLATION INITIATION FACTOR IF-1, CHLOROPLASTIC"/>
    <property type="match status" value="1"/>
</dbReference>
<dbReference type="Pfam" id="PF01176">
    <property type="entry name" value="eIF-1a"/>
    <property type="match status" value="1"/>
</dbReference>
<dbReference type="SUPFAM" id="SSF50249">
    <property type="entry name" value="Nucleic acid-binding proteins"/>
    <property type="match status" value="1"/>
</dbReference>
<dbReference type="PROSITE" id="PS50832">
    <property type="entry name" value="S1_IF1_TYPE"/>
    <property type="match status" value="1"/>
</dbReference>
<name>IF1_FLAPJ</name>
<comment type="function">
    <text evidence="1">One of the essential components for the initiation of protein synthesis. Stabilizes the binding of IF-2 and IF-3 on the 30S subunit to which N-formylmethionyl-tRNA(fMet) subsequently binds. Helps modulate mRNA selection, yielding the 30S pre-initiation complex (PIC). Upon addition of the 50S ribosomal subunit IF-1, IF-2 and IF-3 are released leaving the mature 70S translation initiation complex.</text>
</comment>
<comment type="subunit">
    <text evidence="1">Component of the 30S ribosomal translation pre-initiation complex which assembles on the 30S ribosome in the order IF-2 and IF-3, IF-1 and N-formylmethionyl-tRNA(fMet); mRNA recruitment can occur at any time during PIC assembly.</text>
</comment>
<comment type="subcellular location">
    <subcellularLocation>
        <location evidence="1">Cytoplasm</location>
    </subcellularLocation>
</comment>
<comment type="similarity">
    <text evidence="1">Belongs to the IF-1 family.</text>
</comment>
<gene>
    <name evidence="1" type="primary">infA</name>
    <name type="ordered locus">FP1318</name>
</gene>
<proteinExistence type="inferred from homology"/>
<reference key="1">
    <citation type="journal article" date="2007" name="Nat. Biotechnol.">
        <title>Complete genome sequence of the fish pathogen Flavobacterium psychrophilum.</title>
        <authorList>
            <person name="Duchaud E."/>
            <person name="Boussaha M."/>
            <person name="Loux V."/>
            <person name="Bernardet J.-F."/>
            <person name="Michel C."/>
            <person name="Kerouault B."/>
            <person name="Mondot S."/>
            <person name="Nicolas P."/>
            <person name="Bossy R."/>
            <person name="Caron C."/>
            <person name="Bessieres P."/>
            <person name="Gibrat J.-F."/>
            <person name="Claverol S."/>
            <person name="Dumetz F."/>
            <person name="Le Henaff M."/>
            <person name="Benmansour A."/>
        </authorList>
    </citation>
    <scope>NUCLEOTIDE SEQUENCE [LARGE SCALE GENOMIC DNA]</scope>
    <source>
        <strain>ATCC 49511 / DSM 21280 / CIP 103535 / JIP02/86</strain>
    </source>
</reference>
<feature type="chain" id="PRO_0000338826" description="Translation initiation factor IF-1">
    <location>
        <begin position="1"/>
        <end position="71"/>
    </location>
</feature>
<feature type="domain" description="S1-like" evidence="1">
    <location>
        <begin position="1"/>
        <end position="71"/>
    </location>
</feature>
<keyword id="KW-0963">Cytoplasm</keyword>
<keyword id="KW-0396">Initiation factor</keyword>
<keyword id="KW-0648">Protein biosynthesis</keyword>
<keyword id="KW-1185">Reference proteome</keyword>
<keyword id="KW-0694">RNA-binding</keyword>
<keyword id="KW-0699">rRNA-binding</keyword>
<organism>
    <name type="scientific">Flavobacterium psychrophilum (strain ATCC 49511 / DSM 21280 / CIP 103535 / JIP02/86)</name>
    <dbReference type="NCBI Taxonomy" id="402612"/>
    <lineage>
        <taxon>Bacteria</taxon>
        <taxon>Pseudomonadati</taxon>
        <taxon>Bacteroidota</taxon>
        <taxon>Flavobacteriia</taxon>
        <taxon>Flavobacteriales</taxon>
        <taxon>Flavobacteriaceae</taxon>
        <taxon>Flavobacterium</taxon>
    </lineage>
</organism>
<accession>A6GZ78</accession>
<evidence type="ECO:0000255" key="1">
    <source>
        <dbReference type="HAMAP-Rule" id="MF_00075"/>
    </source>
</evidence>
<sequence>MAKQSAIEQDGAIIEALSNAMFRVELENGHIVIAHISGKMRMHYIKLLPGDKVKLEMSPYDLSKARITYRY</sequence>